<proteinExistence type="predicted"/>
<sequence length="72" mass="8043">MTVVNTEIKFPTHLRAGDFAIIDGMVVEVTSVEYKPVDQAVYLKYRYHLHGNELSGASLISAYKAVRTLEVS</sequence>
<protein>
    <recommendedName>
        <fullName>Gene 83 protein</fullName>
    </recommendedName>
    <alternativeName>
        <fullName>Gp83</fullName>
    </alternativeName>
</protein>
<accession>Q05300</accession>
<organism>
    <name type="scientific">Mycobacterium phage L5</name>
    <name type="common">Mycobacteriophage L5</name>
    <dbReference type="NCBI Taxonomy" id="31757"/>
    <lineage>
        <taxon>Viruses</taxon>
        <taxon>Duplodnaviria</taxon>
        <taxon>Heunggongvirae</taxon>
        <taxon>Uroviricota</taxon>
        <taxon>Caudoviricetes</taxon>
        <taxon>Fromanvirus</taxon>
    </lineage>
</organism>
<feature type="chain" id="PRO_0000164826" description="Gene 83 protein">
    <location>
        <begin position="1"/>
        <end position="72"/>
    </location>
</feature>
<name>VG83_BPML5</name>
<organismHost>
    <name type="scientific">Mycobacterium</name>
    <dbReference type="NCBI Taxonomy" id="1763"/>
</organismHost>
<reference key="1">
    <citation type="journal article" date="1993" name="Mol. Microbiol.">
        <title>DNA sequence, structure and gene expression of mycobacteriophage L5: a phage system for mycobacterial genetics.</title>
        <authorList>
            <person name="Hatfull G.F."/>
            <person name="Sarkis G.J."/>
        </authorList>
    </citation>
    <scope>NUCLEOTIDE SEQUENCE [LARGE SCALE GENOMIC DNA]</scope>
</reference>
<dbReference type="EMBL" id="Z18946">
    <property type="protein sequence ID" value="CAA79459.1"/>
    <property type="molecule type" value="Genomic_DNA"/>
</dbReference>
<dbReference type="PIR" id="S31028">
    <property type="entry name" value="S31028"/>
</dbReference>
<dbReference type="RefSeq" id="NP_039747.1">
    <property type="nucleotide sequence ID" value="NC_001335.1"/>
</dbReference>
<dbReference type="GeneID" id="2942966"/>
<dbReference type="KEGG" id="vg:2942966"/>
<dbReference type="OrthoDB" id="34669at10239"/>
<dbReference type="Proteomes" id="UP000002123">
    <property type="component" value="Genome"/>
</dbReference>
<gene>
    <name type="primary">83</name>
</gene>
<keyword id="KW-1185">Reference proteome</keyword>